<dbReference type="EC" id="7.6.2.11" evidence="1"/>
<dbReference type="EMBL" id="CP000023">
    <property type="protein sequence ID" value="AAV61141.1"/>
    <property type="molecule type" value="Genomic_DNA"/>
</dbReference>
<dbReference type="RefSeq" id="WP_011226381.1">
    <property type="nucleotide sequence ID" value="NC_006448.1"/>
</dbReference>
<dbReference type="SMR" id="Q5M397"/>
<dbReference type="STRING" id="264199.stu1538"/>
<dbReference type="GeneID" id="66899284"/>
<dbReference type="KEGG" id="stl:stu1538"/>
<dbReference type="PATRIC" id="fig|264199.4.peg.1508"/>
<dbReference type="eggNOG" id="COG3842">
    <property type="taxonomic scope" value="Bacteria"/>
</dbReference>
<dbReference type="HOGENOM" id="CLU_000604_1_1_9"/>
<dbReference type="Proteomes" id="UP000001170">
    <property type="component" value="Chromosome"/>
</dbReference>
<dbReference type="GO" id="GO:0043190">
    <property type="term" value="C:ATP-binding cassette (ABC) transporter complex"/>
    <property type="evidence" value="ECO:0007669"/>
    <property type="project" value="InterPro"/>
</dbReference>
<dbReference type="GO" id="GO:0015417">
    <property type="term" value="F:ABC-type polyamine transporter activity"/>
    <property type="evidence" value="ECO:0007669"/>
    <property type="project" value="UniProtKB-EC"/>
</dbReference>
<dbReference type="GO" id="GO:0005524">
    <property type="term" value="F:ATP binding"/>
    <property type="evidence" value="ECO:0007669"/>
    <property type="project" value="UniProtKB-KW"/>
</dbReference>
<dbReference type="GO" id="GO:0016887">
    <property type="term" value="F:ATP hydrolysis activity"/>
    <property type="evidence" value="ECO:0007669"/>
    <property type="project" value="InterPro"/>
</dbReference>
<dbReference type="FunFam" id="3.40.50.300:FF:000042">
    <property type="entry name" value="Maltose/maltodextrin ABC transporter, ATP-binding protein"/>
    <property type="match status" value="1"/>
</dbReference>
<dbReference type="Gene3D" id="2.40.50.100">
    <property type="match status" value="1"/>
</dbReference>
<dbReference type="Gene3D" id="3.40.50.300">
    <property type="entry name" value="P-loop containing nucleotide triphosphate hydrolases"/>
    <property type="match status" value="1"/>
</dbReference>
<dbReference type="InterPro" id="IPR003593">
    <property type="entry name" value="AAA+_ATPase"/>
</dbReference>
<dbReference type="InterPro" id="IPR050093">
    <property type="entry name" value="ABC_SmlMolc_Importer"/>
</dbReference>
<dbReference type="InterPro" id="IPR003439">
    <property type="entry name" value="ABC_transporter-like_ATP-bd"/>
</dbReference>
<dbReference type="InterPro" id="IPR017871">
    <property type="entry name" value="ABC_transporter-like_CS"/>
</dbReference>
<dbReference type="InterPro" id="IPR008995">
    <property type="entry name" value="Mo/tungstate-bd_C_term_dom"/>
</dbReference>
<dbReference type="InterPro" id="IPR027417">
    <property type="entry name" value="P-loop_NTPase"/>
</dbReference>
<dbReference type="InterPro" id="IPR013611">
    <property type="entry name" value="Transp-assoc_OB_typ2"/>
</dbReference>
<dbReference type="PANTHER" id="PTHR42781">
    <property type="entry name" value="SPERMIDINE/PUTRESCINE IMPORT ATP-BINDING PROTEIN POTA"/>
    <property type="match status" value="1"/>
</dbReference>
<dbReference type="PANTHER" id="PTHR42781:SF4">
    <property type="entry name" value="SPERMIDINE_PUTRESCINE IMPORT ATP-BINDING PROTEIN POTA"/>
    <property type="match status" value="1"/>
</dbReference>
<dbReference type="Pfam" id="PF00005">
    <property type="entry name" value="ABC_tran"/>
    <property type="match status" value="1"/>
</dbReference>
<dbReference type="Pfam" id="PF08402">
    <property type="entry name" value="TOBE_2"/>
    <property type="match status" value="1"/>
</dbReference>
<dbReference type="SMART" id="SM00382">
    <property type="entry name" value="AAA"/>
    <property type="match status" value="1"/>
</dbReference>
<dbReference type="SUPFAM" id="SSF50331">
    <property type="entry name" value="MOP-like"/>
    <property type="match status" value="1"/>
</dbReference>
<dbReference type="SUPFAM" id="SSF52540">
    <property type="entry name" value="P-loop containing nucleoside triphosphate hydrolases"/>
    <property type="match status" value="1"/>
</dbReference>
<dbReference type="PROSITE" id="PS00211">
    <property type="entry name" value="ABC_TRANSPORTER_1"/>
    <property type="match status" value="1"/>
</dbReference>
<dbReference type="PROSITE" id="PS50893">
    <property type="entry name" value="ABC_TRANSPORTER_2"/>
    <property type="match status" value="1"/>
</dbReference>
<dbReference type="PROSITE" id="PS51305">
    <property type="entry name" value="POTA"/>
    <property type="match status" value="1"/>
</dbReference>
<keyword id="KW-0067">ATP-binding</keyword>
<keyword id="KW-1003">Cell membrane</keyword>
<keyword id="KW-0472">Membrane</keyword>
<keyword id="KW-0547">Nucleotide-binding</keyword>
<keyword id="KW-1185">Reference proteome</keyword>
<keyword id="KW-1278">Translocase</keyword>
<keyword id="KW-0813">Transport</keyword>
<reference key="1">
    <citation type="journal article" date="2004" name="Nat. Biotechnol.">
        <title>Complete sequence and comparative genome analysis of the dairy bacterium Streptococcus thermophilus.</title>
        <authorList>
            <person name="Bolotin A."/>
            <person name="Quinquis B."/>
            <person name="Renault P."/>
            <person name="Sorokin A."/>
            <person name="Ehrlich S.D."/>
            <person name="Kulakauskas S."/>
            <person name="Lapidus A."/>
            <person name="Goltsman E."/>
            <person name="Mazur M."/>
            <person name="Pusch G.D."/>
            <person name="Fonstein M."/>
            <person name="Overbeek R."/>
            <person name="Kyprides N."/>
            <person name="Purnelle B."/>
            <person name="Prozzi D."/>
            <person name="Ngui K."/>
            <person name="Masuy D."/>
            <person name="Hancy F."/>
            <person name="Burteau S."/>
            <person name="Boutry M."/>
            <person name="Delcour J."/>
            <person name="Goffeau A."/>
            <person name="Hols P."/>
        </authorList>
    </citation>
    <scope>NUCLEOTIDE SEQUENCE [LARGE SCALE GENOMIC DNA]</scope>
    <source>
        <strain>ATCC BAA-250 / LMG 18311</strain>
    </source>
</reference>
<evidence type="ECO:0000255" key="1">
    <source>
        <dbReference type="HAMAP-Rule" id="MF_01726"/>
    </source>
</evidence>
<gene>
    <name evidence="1" type="primary">potA</name>
    <name type="ordered locus">stu1538</name>
</gene>
<sequence>MTNPIIAFQNVSKVFEDSGTQVLKDINFELEEGKFYTLLGASGSGKSTILNIIAGLLDATSGDVLLDGKRINDIPINKRDVHTVFQSYALFPHMNVFDNVAFALKLKKVPKKEIEERVKEALKMVQLDGYQKRSIQKLSGGQRQRVAIARAIINQPRVVLLDEPLSALDLKLRTEMQYELRELQKRLGITFVFVTHDQEEALAMSDWIFVMNDGEIVQSGTPVDIYDEPINHFVATFIGESNILPGVMIEDYLVEFNGKRFESVDGGMRPNEPVEVVIRPEDLQITLPEEGKLQVRVETQLFRGVHYEIIAYDNLGNEWMIHSTRKAIEGEIIGLDFMPEDIHIMRLNETEEEFDARIEEYVEMEEPEDGLIHAIEEERHEENS</sequence>
<name>POTA_STRT2</name>
<accession>Q5M397</accession>
<protein>
    <recommendedName>
        <fullName evidence="1">Spermidine/putrescine import ATP-binding protein PotA</fullName>
        <ecNumber evidence="1">7.6.2.11</ecNumber>
    </recommendedName>
</protein>
<comment type="function">
    <text evidence="1">Part of the ABC transporter complex PotABCD involved in spermidine/putrescine import. Responsible for energy coupling to the transport system.</text>
</comment>
<comment type="catalytic activity">
    <reaction evidence="1">
        <text>ATP + H2O + polyamine-[polyamine-binding protein]Side 1 = ADP + phosphate + polyamineSide 2 + [polyamine-binding protein]Side 1.</text>
        <dbReference type="EC" id="7.6.2.11"/>
    </reaction>
</comment>
<comment type="subunit">
    <text evidence="1">The complex is composed of two ATP-binding proteins (PotA), two transmembrane proteins (PotB and PotC) and a solute-binding protein (PotD).</text>
</comment>
<comment type="subcellular location">
    <subcellularLocation>
        <location evidence="1">Cell membrane</location>
        <topology evidence="1">Peripheral membrane protein</topology>
    </subcellularLocation>
</comment>
<comment type="similarity">
    <text evidence="1">Belongs to the ABC transporter superfamily. Spermidine/putrescine importer (TC 3.A.1.11.1) family.</text>
</comment>
<proteinExistence type="inferred from homology"/>
<feature type="chain" id="PRO_0000286315" description="Spermidine/putrescine import ATP-binding protein PotA">
    <location>
        <begin position="1"/>
        <end position="384"/>
    </location>
</feature>
<feature type="domain" description="ABC transporter" evidence="1">
    <location>
        <begin position="6"/>
        <end position="238"/>
    </location>
</feature>
<feature type="binding site" evidence="1">
    <location>
        <begin position="40"/>
        <end position="47"/>
    </location>
    <ligand>
        <name>ATP</name>
        <dbReference type="ChEBI" id="CHEBI:30616"/>
    </ligand>
</feature>
<organism>
    <name type="scientific">Streptococcus thermophilus (strain ATCC BAA-250 / LMG 18311)</name>
    <dbReference type="NCBI Taxonomy" id="264199"/>
    <lineage>
        <taxon>Bacteria</taxon>
        <taxon>Bacillati</taxon>
        <taxon>Bacillota</taxon>
        <taxon>Bacilli</taxon>
        <taxon>Lactobacillales</taxon>
        <taxon>Streptococcaceae</taxon>
        <taxon>Streptococcus</taxon>
    </lineage>
</organism>